<protein>
    <recommendedName>
        <fullName evidence="1">3-phosphoshikimate 1-carboxyvinyltransferase</fullName>
        <ecNumber evidence="1">2.5.1.19</ecNumber>
    </recommendedName>
    <alternativeName>
        <fullName evidence="1">5-enolpyruvylshikimate-3-phosphate synthase</fullName>
        <shortName evidence="1">EPSP synthase</shortName>
        <shortName evidence="1">EPSPS</shortName>
    </alternativeName>
</protein>
<name>AROA_CAMFF</name>
<sequence length="425" mass="46159">MIVEALNNPFDAEFNKVSSDKSISHRCAIFSLLSDKVSKISNYLEAEDTMNSLKIIEKLGAKVEFKNGVYLITPPKKIVSPNAILECGNSGTAMRIFMGLLAGCDGFFVLSGDKYLNERPMKRVASPLMQIGAKIDGRDCANKAPLAIRGGELNYFAYNSSVASAQVKTALILAGLCSAGCKFKEPELSRDHSERMLLGMGAQISQSGLEIEVKPLKGAYLKPLILDVPNDPSSCFFYAVAAAIIPGSKIIIKNILLNKTRIEAYKVLEKMGAKITYTKTSSTYEDIGDICVQYSELKSVDVNQNISWLIDEAPALAIAFACANGVSTLKNAKELRVKECDRIAITVAALKKCGIEAVELEDGFSIKGGKPNSATIDSHGDHRIAMSFAILGLKCGMNIEKSEFIATSFPKFSYFLRELGARVED</sequence>
<feature type="chain" id="PRO_1000099675" description="3-phosphoshikimate 1-carboxyvinyltransferase">
    <location>
        <begin position="1"/>
        <end position="425"/>
    </location>
</feature>
<feature type="active site" description="Proton acceptor" evidence="1">
    <location>
        <position position="311"/>
    </location>
</feature>
<feature type="binding site" evidence="1">
    <location>
        <position position="21"/>
    </location>
    <ligand>
        <name>3-phosphoshikimate</name>
        <dbReference type="ChEBI" id="CHEBI:145989"/>
    </ligand>
</feature>
<feature type="binding site" evidence="1">
    <location>
        <position position="21"/>
    </location>
    <ligand>
        <name>phosphoenolpyruvate</name>
        <dbReference type="ChEBI" id="CHEBI:58702"/>
    </ligand>
</feature>
<feature type="binding site" evidence="1">
    <location>
        <position position="22"/>
    </location>
    <ligand>
        <name>3-phosphoshikimate</name>
        <dbReference type="ChEBI" id="CHEBI:145989"/>
    </ligand>
</feature>
<feature type="binding site" evidence="1">
    <location>
        <position position="26"/>
    </location>
    <ligand>
        <name>3-phosphoshikimate</name>
        <dbReference type="ChEBI" id="CHEBI:145989"/>
    </ligand>
</feature>
<feature type="binding site" evidence="1">
    <location>
        <position position="91"/>
    </location>
    <ligand>
        <name>phosphoenolpyruvate</name>
        <dbReference type="ChEBI" id="CHEBI:58702"/>
    </ligand>
</feature>
<feature type="binding site" evidence="1">
    <location>
        <position position="119"/>
    </location>
    <ligand>
        <name>phosphoenolpyruvate</name>
        <dbReference type="ChEBI" id="CHEBI:58702"/>
    </ligand>
</feature>
<feature type="binding site" evidence="1">
    <location>
        <position position="164"/>
    </location>
    <ligand>
        <name>3-phosphoshikimate</name>
        <dbReference type="ChEBI" id="CHEBI:145989"/>
    </ligand>
</feature>
<feature type="binding site" evidence="1">
    <location>
        <position position="166"/>
    </location>
    <ligand>
        <name>3-phosphoshikimate</name>
        <dbReference type="ChEBI" id="CHEBI:145989"/>
    </ligand>
</feature>
<feature type="binding site" evidence="1">
    <location>
        <position position="166"/>
    </location>
    <ligand>
        <name>phosphoenolpyruvate</name>
        <dbReference type="ChEBI" id="CHEBI:58702"/>
    </ligand>
</feature>
<feature type="binding site" evidence="1">
    <location>
        <position position="311"/>
    </location>
    <ligand>
        <name>3-phosphoshikimate</name>
        <dbReference type="ChEBI" id="CHEBI:145989"/>
    </ligand>
</feature>
<feature type="binding site" evidence="1">
    <location>
        <position position="338"/>
    </location>
    <ligand>
        <name>3-phosphoshikimate</name>
        <dbReference type="ChEBI" id="CHEBI:145989"/>
    </ligand>
</feature>
<feature type="binding site" evidence="1">
    <location>
        <position position="342"/>
    </location>
    <ligand>
        <name>phosphoenolpyruvate</name>
        <dbReference type="ChEBI" id="CHEBI:58702"/>
    </ligand>
</feature>
<feature type="binding site" evidence="1">
    <location>
        <position position="383"/>
    </location>
    <ligand>
        <name>phosphoenolpyruvate</name>
        <dbReference type="ChEBI" id="CHEBI:58702"/>
    </ligand>
</feature>
<evidence type="ECO:0000255" key="1">
    <source>
        <dbReference type="HAMAP-Rule" id="MF_00210"/>
    </source>
</evidence>
<comment type="function">
    <text evidence="1">Catalyzes the transfer of the enolpyruvyl moiety of phosphoenolpyruvate (PEP) to the 5-hydroxyl of shikimate-3-phosphate (S3P) to produce enolpyruvyl shikimate-3-phosphate and inorganic phosphate.</text>
</comment>
<comment type="catalytic activity">
    <reaction evidence="1">
        <text>3-phosphoshikimate + phosphoenolpyruvate = 5-O-(1-carboxyvinyl)-3-phosphoshikimate + phosphate</text>
        <dbReference type="Rhea" id="RHEA:21256"/>
        <dbReference type="ChEBI" id="CHEBI:43474"/>
        <dbReference type="ChEBI" id="CHEBI:57701"/>
        <dbReference type="ChEBI" id="CHEBI:58702"/>
        <dbReference type="ChEBI" id="CHEBI:145989"/>
        <dbReference type="EC" id="2.5.1.19"/>
    </reaction>
    <physiologicalReaction direction="left-to-right" evidence="1">
        <dbReference type="Rhea" id="RHEA:21257"/>
    </physiologicalReaction>
</comment>
<comment type="pathway">
    <text evidence="1">Metabolic intermediate biosynthesis; chorismate biosynthesis; chorismate from D-erythrose 4-phosphate and phosphoenolpyruvate: step 6/7.</text>
</comment>
<comment type="subunit">
    <text evidence="1">Monomer.</text>
</comment>
<comment type="subcellular location">
    <subcellularLocation>
        <location evidence="1">Cytoplasm</location>
    </subcellularLocation>
</comment>
<comment type="similarity">
    <text evidence="1">Belongs to the EPSP synthase family.</text>
</comment>
<gene>
    <name evidence="1" type="primary">aroA</name>
    <name type="ordered locus">CFF8240_1252</name>
</gene>
<reference key="1">
    <citation type="submission" date="2006-11" db="EMBL/GenBank/DDBJ databases">
        <title>Sequence of Campylobacter fetus subsp. fetus 82-40.</title>
        <authorList>
            <person name="Fouts D.E."/>
            <person name="Nelson K.E."/>
        </authorList>
    </citation>
    <scope>NUCLEOTIDE SEQUENCE [LARGE SCALE GENOMIC DNA]</scope>
    <source>
        <strain>82-40</strain>
    </source>
</reference>
<proteinExistence type="inferred from homology"/>
<dbReference type="EC" id="2.5.1.19" evidence="1"/>
<dbReference type="EMBL" id="CP000487">
    <property type="protein sequence ID" value="ABK82992.1"/>
    <property type="molecule type" value="Genomic_DNA"/>
</dbReference>
<dbReference type="RefSeq" id="WP_002850025.1">
    <property type="nucleotide sequence ID" value="NC_008599.1"/>
</dbReference>
<dbReference type="SMR" id="A0RQC5"/>
<dbReference type="GeneID" id="61065077"/>
<dbReference type="KEGG" id="cff:CFF8240_1252"/>
<dbReference type="eggNOG" id="COG0128">
    <property type="taxonomic scope" value="Bacteria"/>
</dbReference>
<dbReference type="HOGENOM" id="CLU_024321_0_1_7"/>
<dbReference type="UniPathway" id="UPA00053">
    <property type="reaction ID" value="UER00089"/>
</dbReference>
<dbReference type="Proteomes" id="UP000000760">
    <property type="component" value="Chromosome"/>
</dbReference>
<dbReference type="GO" id="GO:0005737">
    <property type="term" value="C:cytoplasm"/>
    <property type="evidence" value="ECO:0007669"/>
    <property type="project" value="UniProtKB-SubCell"/>
</dbReference>
<dbReference type="GO" id="GO:0003866">
    <property type="term" value="F:3-phosphoshikimate 1-carboxyvinyltransferase activity"/>
    <property type="evidence" value="ECO:0007669"/>
    <property type="project" value="UniProtKB-UniRule"/>
</dbReference>
<dbReference type="GO" id="GO:0008652">
    <property type="term" value="P:amino acid biosynthetic process"/>
    <property type="evidence" value="ECO:0007669"/>
    <property type="project" value="UniProtKB-KW"/>
</dbReference>
<dbReference type="GO" id="GO:0009073">
    <property type="term" value="P:aromatic amino acid family biosynthetic process"/>
    <property type="evidence" value="ECO:0007669"/>
    <property type="project" value="UniProtKB-KW"/>
</dbReference>
<dbReference type="GO" id="GO:0009423">
    <property type="term" value="P:chorismate biosynthetic process"/>
    <property type="evidence" value="ECO:0007669"/>
    <property type="project" value="UniProtKB-UniRule"/>
</dbReference>
<dbReference type="CDD" id="cd01556">
    <property type="entry name" value="EPSP_synthase"/>
    <property type="match status" value="1"/>
</dbReference>
<dbReference type="FunFam" id="3.65.10.10:FF:000005">
    <property type="entry name" value="3-phosphoshikimate 1-carboxyvinyltransferase"/>
    <property type="match status" value="1"/>
</dbReference>
<dbReference type="Gene3D" id="3.65.10.10">
    <property type="entry name" value="Enolpyruvate transferase domain"/>
    <property type="match status" value="2"/>
</dbReference>
<dbReference type="HAMAP" id="MF_00210">
    <property type="entry name" value="EPSP_synth"/>
    <property type="match status" value="1"/>
</dbReference>
<dbReference type="InterPro" id="IPR001986">
    <property type="entry name" value="Enolpyruvate_Tfrase_dom"/>
</dbReference>
<dbReference type="InterPro" id="IPR036968">
    <property type="entry name" value="Enolpyruvate_Tfrase_sf"/>
</dbReference>
<dbReference type="InterPro" id="IPR006264">
    <property type="entry name" value="EPSP_synthase"/>
</dbReference>
<dbReference type="InterPro" id="IPR023193">
    <property type="entry name" value="EPSP_synthase_CS"/>
</dbReference>
<dbReference type="InterPro" id="IPR013792">
    <property type="entry name" value="RNA3'P_cycl/enolpyr_Trfase_a/b"/>
</dbReference>
<dbReference type="NCBIfam" id="TIGR01356">
    <property type="entry name" value="aroA"/>
    <property type="match status" value="1"/>
</dbReference>
<dbReference type="PANTHER" id="PTHR21090">
    <property type="entry name" value="AROM/DEHYDROQUINATE SYNTHASE"/>
    <property type="match status" value="1"/>
</dbReference>
<dbReference type="PANTHER" id="PTHR21090:SF5">
    <property type="entry name" value="PENTAFUNCTIONAL AROM POLYPEPTIDE"/>
    <property type="match status" value="1"/>
</dbReference>
<dbReference type="Pfam" id="PF00275">
    <property type="entry name" value="EPSP_synthase"/>
    <property type="match status" value="1"/>
</dbReference>
<dbReference type="PIRSF" id="PIRSF000505">
    <property type="entry name" value="EPSPS"/>
    <property type="match status" value="1"/>
</dbReference>
<dbReference type="SUPFAM" id="SSF55205">
    <property type="entry name" value="EPT/RTPC-like"/>
    <property type="match status" value="1"/>
</dbReference>
<dbReference type="PROSITE" id="PS00104">
    <property type="entry name" value="EPSP_SYNTHASE_1"/>
    <property type="match status" value="1"/>
</dbReference>
<accession>A0RQC5</accession>
<organism>
    <name type="scientific">Campylobacter fetus subsp. fetus (strain 82-40)</name>
    <dbReference type="NCBI Taxonomy" id="360106"/>
    <lineage>
        <taxon>Bacteria</taxon>
        <taxon>Pseudomonadati</taxon>
        <taxon>Campylobacterota</taxon>
        <taxon>Epsilonproteobacteria</taxon>
        <taxon>Campylobacterales</taxon>
        <taxon>Campylobacteraceae</taxon>
        <taxon>Campylobacter</taxon>
    </lineage>
</organism>
<keyword id="KW-0028">Amino-acid biosynthesis</keyword>
<keyword id="KW-0057">Aromatic amino acid biosynthesis</keyword>
<keyword id="KW-0963">Cytoplasm</keyword>
<keyword id="KW-0808">Transferase</keyword>